<sequence length="799" mass="93172">MLYSTSDKSLVHCSVPQQIFYRAEECMGDEIVGSLLCKENILLCTPRKYIFPHLVLRALNMDETMGFQKRENPSKRAEILVVTNRLEMLAFLETCRVNAERLFQICSNIHQYIGYCNMGDTYFARVYWRHILYHYYEGKLPQDVPLHYIYPVASGYRKFNALSRGNRNILGRKDSQNPTIYVTENLDMLNEQEHSFDYIFVDCSYIKKGLSNLPKSTLLFFDNLLDDRIPYLQKSAVKNYIVDGDCIQNIDENEIQQPMINIEELLHKVSIHSLDVEYVKSSFEQEIERLIHLLDKLRKGKFSRYDTNVAAKLVYILIRLPIGAGLYDLIASMQPYWDTVLGLLQELKDSESRYENDSFEEMVSLFEDILYKHSLDRSNPKGDELKAFILNEVKQGKSVCVVSNSRKNQLALKEFISLAMGMTIEELAEYDLQFFVSKDIWAQDITVHCDSLVMYSAINFRDLQSLLKISYKRAKLYLYSSEINLITQKLKTILEAENYALRHFVQNSTQQDSTNFYRYLYNRFNKFARQKVIGLNSAAADLLEKSTTVSPAVYRGEKDYKGTDAVKATLVHFTDGSVSFFTKNSAVYVLDNKNKRVTHKHFHEIGLKDTILFVDNDARKDLYRIFIQSVDAKDTSKQAYLSIKKWRELYEEKFMEKRMDDDRLFRLMRTAGWNKTTKSVLRNWRTGYSYGPRDREDIMVLGEVLGINTFVEDVQTYYNAMSKIRVERRKASRILNKLIYSSKQVLGNEDSAILARYNLTLEQLNESLVTKSIKEIVSDRMYYIKPAEVGLLYNVDAKE</sequence>
<organism>
    <name type="scientific">Bacillus paralicheniformis (strain ATCC 9945a / NCIMB 11709 / CD-2)</name>
    <dbReference type="NCBI Taxonomy" id="766760"/>
    <lineage>
        <taxon>Bacteria</taxon>
        <taxon>Bacillati</taxon>
        <taxon>Bacillota</taxon>
        <taxon>Bacilli</taxon>
        <taxon>Bacillales</taxon>
        <taxon>Bacillaceae</taxon>
        <taxon>Bacillus</taxon>
    </lineage>
</organism>
<evidence type="ECO:0000269" key="1">
    <source>
    </source>
</evidence>
<evidence type="ECO:0000303" key="2">
    <source>
    </source>
</evidence>
<evidence type="ECO:0000305" key="3"/>
<evidence type="ECO:0000312" key="4">
    <source>
        <dbReference type="EMBL" id="AGN35226.1"/>
    </source>
</evidence>
<name>DRME_BACP9</name>
<dbReference type="EMBL" id="CP005965">
    <property type="protein sequence ID" value="AGN35226.1"/>
    <property type="molecule type" value="Genomic_DNA"/>
</dbReference>
<dbReference type="RefSeq" id="WP_020450478.1">
    <property type="nucleotide sequence ID" value="NC_021362.1"/>
</dbReference>
<dbReference type="KEGG" id="blh:BaLi_c08310"/>
<dbReference type="GO" id="GO:0005737">
    <property type="term" value="C:cytoplasm"/>
    <property type="evidence" value="ECO:0007669"/>
    <property type="project" value="UniProtKB-SubCell"/>
</dbReference>
<dbReference type="GO" id="GO:0051607">
    <property type="term" value="P:defense response to virus"/>
    <property type="evidence" value="ECO:0007669"/>
    <property type="project" value="UniProtKB-KW"/>
</dbReference>
<dbReference type="GO" id="GO:0009307">
    <property type="term" value="P:DNA restriction-modification system"/>
    <property type="evidence" value="ECO:0007669"/>
    <property type="project" value="UniProtKB-KW"/>
</dbReference>
<dbReference type="InterPro" id="IPR049794">
    <property type="entry name" value="DrmE"/>
</dbReference>
<dbReference type="InterPro" id="IPR056666">
    <property type="entry name" value="DrmE_C"/>
</dbReference>
<dbReference type="NCBIfam" id="NF038323">
    <property type="entry name" value="DISARM_DrmE"/>
    <property type="match status" value="1"/>
</dbReference>
<dbReference type="NCBIfam" id="NF038316">
    <property type="entry name" value="DrmE_fam"/>
    <property type="match status" value="1"/>
</dbReference>
<dbReference type="Pfam" id="PF24957">
    <property type="entry name" value="DrmE_C"/>
    <property type="match status" value="1"/>
</dbReference>
<gene>
    <name evidence="2" type="primary">drmE</name>
    <name evidence="4" type="ordered locus">BaLi_c08310</name>
</gene>
<feature type="chain" id="PRO_0000456310" description="DISARM protein DrmE">
    <location>
        <begin position="1"/>
        <end position="799"/>
    </location>
</feature>
<protein>
    <recommendedName>
        <fullName evidence="2">DISARM protein DrmE</fullName>
    </recommendedName>
</protein>
<reference key="1">
    <citation type="journal article" date="2013" name="Genome Announc.">
        <title>First Insights into the Completely Annotated Genome Sequence of Bacillus licheniformis Strain 9945A.</title>
        <authorList>
            <person name="Rachinger M."/>
            <person name="Volland S."/>
            <person name="Meinhardt F."/>
            <person name="Daniel R."/>
            <person name="Liesegang H."/>
        </authorList>
    </citation>
    <scope>NUCLEOTIDE SEQUENCE [LARGE SCALE GENOMIC DNA]</scope>
    <source>
        <strain>ATCC 9945a / NCIMB 11709 / CD-2</strain>
    </source>
</reference>
<reference key="2">
    <citation type="journal article" date="2018" name="Nat. Microbiol.">
        <title>DISARM is a widespread bacterial defence system with broad anti-phage activities.</title>
        <authorList>
            <person name="Ofir G."/>
            <person name="Melamed S."/>
            <person name="Sberro H."/>
            <person name="Mukamel Z."/>
            <person name="Silverman S."/>
            <person name="Yaakov G."/>
            <person name="Doron S."/>
            <person name="Sorek R."/>
        </authorList>
    </citation>
    <scope>FUNCTION</scope>
    <scope>DISRUPTION PHENOTYPE</scope>
    <scope>EXPRESSION IN B.SUBTILIS</scope>
    <source>
        <strain>ATCC 9945a / NCIMB 11709 / CD-2</strain>
    </source>
</reference>
<accession>P0DW04</accession>
<proteinExistence type="predicted"/>
<comment type="function">
    <text evidence="1">Component of antiviral defense system DISARM (defense island system associated with restriction-modification), composed of DrmE, DrmA, DrmB, DrmC and DrmMII. DISARM is probably a multi-gene restriction module, this subunit has an unknown function. Expression of DISARM in B.subtilis (strain BEST7003) confers resistance to phages Nf, phi29, phi105, phi3T, SPO1, SPR and SPP1. Protection is over 10(7)-fold against phi3T, 10(4)-10(5)-fold against Nf, phi29, phi105 and SPR, 100-fold against SPO1 and 10-fold against SPP1. DISARM does not interfere with phage adsorption, but instead interferes with (phi3T) DNA replication early in its cycle, preventing replication, circularization and lysogeny and probably causes phage DNA degradation (DNA is degraded in SPP1-infected cells).</text>
</comment>
<comment type="subcellular location">
    <subcellularLocation>
        <location evidence="3">Cytoplasm</location>
    </subcellularLocation>
</comment>
<comment type="disruption phenotype">
    <text evidence="1">When this gene is missing the DISARM system does not confer Nf, phi3T or SPO1 resistance in B.subtilis.</text>
</comment>
<keyword id="KW-0051">Antiviral defense</keyword>
<keyword id="KW-0963">Cytoplasm</keyword>
<keyword id="KW-0680">Restriction system</keyword>